<feature type="chain" id="PRO_0000260192" description="Fe(3+) ions import ATP-binding protein FbpC">
    <location>
        <begin position="1"/>
        <end position="353"/>
    </location>
</feature>
<feature type="domain" description="ABC transporter" evidence="1">
    <location>
        <begin position="9"/>
        <end position="239"/>
    </location>
</feature>
<feature type="binding site" evidence="1">
    <location>
        <begin position="41"/>
        <end position="48"/>
    </location>
    <ligand>
        <name>ATP</name>
        <dbReference type="ChEBI" id="CHEBI:30616"/>
    </ligand>
</feature>
<organism>
    <name type="scientific">Brucella abortus biovar 1 (strain 9-941)</name>
    <dbReference type="NCBI Taxonomy" id="262698"/>
    <lineage>
        <taxon>Bacteria</taxon>
        <taxon>Pseudomonadati</taxon>
        <taxon>Pseudomonadota</taxon>
        <taxon>Alphaproteobacteria</taxon>
        <taxon>Hyphomicrobiales</taxon>
        <taxon>Brucellaceae</taxon>
        <taxon>Brucella/Ochrobactrum group</taxon>
        <taxon>Brucella</taxon>
    </lineage>
</organism>
<sequence length="353" mass="37890">MTAIRPGSVTFENVTKKFGNFTALPNLSLTVEPGTLVTLLGPSGCGKTTTLRLLAGLEHPTSGRILIGGKDVTNLPANERDVSMVFQSYALFPHMTSLENVAYGLESSGFKKNEARERAEEGLKLVGLGGMGHRLPAELSGGQQQRVAVARALVLEPQVLLLDEPLSTLDARLRRRVRTEIRELQQRLGFTAVYVTHDQDEALAVSDTIIVMKEGGIAQKGSPRDLYEAPASAFIADFMGEANVVPCEVISAENGEAVIRVAGLTHRVPARNAQPGPAQLAIRPNAVTLQPQAGGGFSGTVAHSAYLGDHIEYEIETEHGKLFIVDPAVEQSLPLQTDVSIQFKTRGLAIINQ</sequence>
<comment type="function">
    <text evidence="1">Part of the ABC transporter complex FbpABC involved in Fe(3+) ions import. Responsible for energy coupling to the transport system.</text>
</comment>
<comment type="catalytic activity">
    <reaction evidence="1">
        <text>Fe(3+)(out) + ATP + H2O = Fe(3+)(in) + ADP + phosphate + H(+)</text>
        <dbReference type="Rhea" id="RHEA:12332"/>
        <dbReference type="ChEBI" id="CHEBI:15377"/>
        <dbReference type="ChEBI" id="CHEBI:15378"/>
        <dbReference type="ChEBI" id="CHEBI:29034"/>
        <dbReference type="ChEBI" id="CHEBI:30616"/>
        <dbReference type="ChEBI" id="CHEBI:43474"/>
        <dbReference type="ChEBI" id="CHEBI:456216"/>
        <dbReference type="EC" id="7.2.2.7"/>
    </reaction>
</comment>
<comment type="subunit">
    <text evidence="1">The complex is composed of two ATP-binding proteins (FbpC), two transmembrane proteins (FbpB) and a solute-binding protein (FbpA).</text>
</comment>
<comment type="subcellular location">
    <subcellularLocation>
        <location evidence="1">Cell inner membrane</location>
        <topology evidence="1">Peripheral membrane protein</topology>
    </subcellularLocation>
</comment>
<comment type="similarity">
    <text evidence="1">Belongs to the ABC transporter superfamily. Fe(3+) ion importer (TC 3.A.1.10) family.</text>
</comment>
<protein>
    <recommendedName>
        <fullName evidence="1">Fe(3+) ions import ATP-binding protein FbpC</fullName>
        <ecNumber evidence="1">7.2.2.7</ecNumber>
    </recommendedName>
</protein>
<accession>Q578K3</accession>
<name>FBPC_BRUAB</name>
<evidence type="ECO:0000255" key="1">
    <source>
        <dbReference type="HAMAP-Rule" id="MF_01706"/>
    </source>
</evidence>
<gene>
    <name evidence="1" type="primary">fbpC</name>
    <name type="ordered locus">BruAb2_0512</name>
</gene>
<reference key="1">
    <citation type="journal article" date="2005" name="J. Bacteriol.">
        <title>Completion of the genome sequence of Brucella abortus and comparison to the highly similar genomes of Brucella melitensis and Brucella suis.</title>
        <authorList>
            <person name="Halling S.M."/>
            <person name="Peterson-Burch B.D."/>
            <person name="Bricker B.J."/>
            <person name="Zuerner R.L."/>
            <person name="Qing Z."/>
            <person name="Li L.-L."/>
            <person name="Kapur V."/>
            <person name="Alt D.P."/>
            <person name="Olsen S.C."/>
        </authorList>
    </citation>
    <scope>NUCLEOTIDE SEQUENCE [LARGE SCALE GENOMIC DNA]</scope>
    <source>
        <strain>9-941</strain>
    </source>
</reference>
<keyword id="KW-0067">ATP-binding</keyword>
<keyword id="KW-0997">Cell inner membrane</keyword>
<keyword id="KW-1003">Cell membrane</keyword>
<keyword id="KW-0406">Ion transport</keyword>
<keyword id="KW-0408">Iron</keyword>
<keyword id="KW-0410">Iron transport</keyword>
<keyword id="KW-0472">Membrane</keyword>
<keyword id="KW-0547">Nucleotide-binding</keyword>
<keyword id="KW-1278">Translocase</keyword>
<keyword id="KW-0813">Transport</keyword>
<proteinExistence type="inferred from homology"/>
<dbReference type="EC" id="7.2.2.7" evidence="1"/>
<dbReference type="EMBL" id="AE017224">
    <property type="protein sequence ID" value="AAX75931.1"/>
    <property type="molecule type" value="Genomic_DNA"/>
</dbReference>
<dbReference type="RefSeq" id="WP_002965923.1">
    <property type="nucleotide sequence ID" value="NC_006933.1"/>
</dbReference>
<dbReference type="SMR" id="Q578K3"/>
<dbReference type="EnsemblBacteria" id="AAX75931">
    <property type="protein sequence ID" value="AAX75931"/>
    <property type="gene ID" value="BruAb2_0512"/>
</dbReference>
<dbReference type="KEGG" id="bmb:BruAb2_0512"/>
<dbReference type="HOGENOM" id="CLU_000604_1_1_5"/>
<dbReference type="Proteomes" id="UP000000540">
    <property type="component" value="Chromosome II"/>
</dbReference>
<dbReference type="GO" id="GO:0043190">
    <property type="term" value="C:ATP-binding cassette (ABC) transporter complex"/>
    <property type="evidence" value="ECO:0007669"/>
    <property type="project" value="InterPro"/>
</dbReference>
<dbReference type="GO" id="GO:0015408">
    <property type="term" value="F:ABC-type ferric iron transporter activity"/>
    <property type="evidence" value="ECO:0007669"/>
    <property type="project" value="UniProtKB-EC"/>
</dbReference>
<dbReference type="GO" id="GO:0005524">
    <property type="term" value="F:ATP binding"/>
    <property type="evidence" value="ECO:0007669"/>
    <property type="project" value="UniProtKB-KW"/>
</dbReference>
<dbReference type="GO" id="GO:0016887">
    <property type="term" value="F:ATP hydrolysis activity"/>
    <property type="evidence" value="ECO:0007669"/>
    <property type="project" value="InterPro"/>
</dbReference>
<dbReference type="FunFam" id="3.40.50.300:FF:000425">
    <property type="entry name" value="Probable ABC transporter, ATP-binding subunit"/>
    <property type="match status" value="1"/>
</dbReference>
<dbReference type="Gene3D" id="2.40.50.100">
    <property type="match status" value="1"/>
</dbReference>
<dbReference type="Gene3D" id="3.40.50.300">
    <property type="entry name" value="P-loop containing nucleotide triphosphate hydrolases"/>
    <property type="match status" value="1"/>
</dbReference>
<dbReference type="InterPro" id="IPR003593">
    <property type="entry name" value="AAA+_ATPase"/>
</dbReference>
<dbReference type="InterPro" id="IPR050093">
    <property type="entry name" value="ABC_SmlMolc_Importer"/>
</dbReference>
<dbReference type="InterPro" id="IPR003439">
    <property type="entry name" value="ABC_transporter-like_ATP-bd"/>
</dbReference>
<dbReference type="InterPro" id="IPR017871">
    <property type="entry name" value="ABC_transporter-like_CS"/>
</dbReference>
<dbReference type="InterPro" id="IPR008995">
    <property type="entry name" value="Mo/tungstate-bd_C_term_dom"/>
</dbReference>
<dbReference type="InterPro" id="IPR027417">
    <property type="entry name" value="P-loop_NTPase"/>
</dbReference>
<dbReference type="InterPro" id="IPR013611">
    <property type="entry name" value="Transp-assoc_OB_typ2"/>
</dbReference>
<dbReference type="PANTHER" id="PTHR42781">
    <property type="entry name" value="SPERMIDINE/PUTRESCINE IMPORT ATP-BINDING PROTEIN POTA"/>
    <property type="match status" value="1"/>
</dbReference>
<dbReference type="PANTHER" id="PTHR42781:SF1">
    <property type="entry name" value="THIAMINE IMPORT ATP-BINDING PROTEIN THIQ"/>
    <property type="match status" value="1"/>
</dbReference>
<dbReference type="Pfam" id="PF00005">
    <property type="entry name" value="ABC_tran"/>
    <property type="match status" value="1"/>
</dbReference>
<dbReference type="Pfam" id="PF08402">
    <property type="entry name" value="TOBE_2"/>
    <property type="match status" value="1"/>
</dbReference>
<dbReference type="SMART" id="SM00382">
    <property type="entry name" value="AAA"/>
    <property type="match status" value="1"/>
</dbReference>
<dbReference type="SUPFAM" id="SSF50331">
    <property type="entry name" value="MOP-like"/>
    <property type="match status" value="1"/>
</dbReference>
<dbReference type="SUPFAM" id="SSF52540">
    <property type="entry name" value="P-loop containing nucleoside triphosphate hydrolases"/>
    <property type="match status" value="1"/>
</dbReference>
<dbReference type="PROSITE" id="PS00211">
    <property type="entry name" value="ABC_TRANSPORTER_1"/>
    <property type="match status" value="1"/>
</dbReference>
<dbReference type="PROSITE" id="PS50893">
    <property type="entry name" value="ABC_TRANSPORTER_2"/>
    <property type="match status" value="1"/>
</dbReference>
<dbReference type="PROSITE" id="PS51242">
    <property type="entry name" value="FBPC"/>
    <property type="match status" value="1"/>
</dbReference>